<feature type="chain" id="PRO_0000208086" description="O-acetyltransferase OatA">
    <location>
        <begin position="1"/>
        <end position="603"/>
    </location>
</feature>
<feature type="transmembrane region" description="Helical" evidence="3">
    <location>
        <begin position="17"/>
        <end position="37"/>
    </location>
</feature>
<feature type="transmembrane region" description="Helical" evidence="3">
    <location>
        <begin position="45"/>
        <end position="65"/>
    </location>
</feature>
<feature type="transmembrane region" description="Helical" evidence="3">
    <location>
        <begin position="87"/>
        <end position="107"/>
    </location>
</feature>
<feature type="transmembrane region" description="Helical" evidence="3">
    <location>
        <begin position="148"/>
        <end position="168"/>
    </location>
</feature>
<feature type="transmembrane region" description="Helical" evidence="3">
    <location>
        <begin position="177"/>
        <end position="197"/>
    </location>
</feature>
<feature type="transmembrane region" description="Helical" evidence="3">
    <location>
        <begin position="211"/>
        <end position="231"/>
    </location>
</feature>
<feature type="transmembrane region" description="Helical" evidence="3">
    <location>
        <begin position="239"/>
        <end position="259"/>
    </location>
</feature>
<feature type="transmembrane region" description="Helical" evidence="3">
    <location>
        <begin position="268"/>
        <end position="288"/>
    </location>
</feature>
<feature type="transmembrane region" description="Helical" evidence="3">
    <location>
        <begin position="311"/>
        <end position="331"/>
    </location>
</feature>
<feature type="transmembrane region" description="Helical" evidence="3">
    <location>
        <begin position="333"/>
        <end position="353"/>
    </location>
</feature>
<feature type="transmembrane region" description="Helical" evidence="3">
    <location>
        <begin position="382"/>
        <end position="402"/>
    </location>
</feature>
<feature type="active site" evidence="2">
    <location>
        <position position="453"/>
    </location>
</feature>
<feature type="active site" evidence="2">
    <location>
        <position position="575"/>
    </location>
</feature>
<feature type="active site" evidence="2">
    <location>
        <position position="578"/>
    </location>
</feature>
<protein>
    <recommendedName>
        <fullName>O-acetyltransferase OatA</fullName>
        <ecNumber evidence="2">2.3.1.-</ecNumber>
    </recommendedName>
</protein>
<proteinExistence type="inferred from homology"/>
<keyword id="KW-0012">Acyltransferase</keyword>
<keyword id="KW-1003">Cell membrane</keyword>
<keyword id="KW-0472">Membrane</keyword>
<keyword id="KW-0808">Transferase</keyword>
<keyword id="KW-0812">Transmembrane</keyword>
<keyword id="KW-1133">Transmembrane helix</keyword>
<organism>
    <name type="scientific">Staphylococcus aureus (strain Mu50 / ATCC 700699)</name>
    <dbReference type="NCBI Taxonomy" id="158878"/>
    <lineage>
        <taxon>Bacteria</taxon>
        <taxon>Bacillati</taxon>
        <taxon>Bacillota</taxon>
        <taxon>Bacilli</taxon>
        <taxon>Bacillales</taxon>
        <taxon>Staphylococcaceae</taxon>
        <taxon>Staphylococcus</taxon>
    </lineage>
</organism>
<accession>Q99R71</accession>
<comment type="function">
    <text evidence="2">Responsible for O-acetylation at the C(6)-hydroxyl group of N-acetylmuramyl residues, forming the corresponding N,6-O-diacetylmuramic acid of the peptidoglycan. O-acetylation of the peptidoglycan is the major determinant for lysozyme resistance.</text>
</comment>
<comment type="subcellular location">
    <subcellularLocation>
        <location evidence="1">Cell membrane</location>
        <topology evidence="1">Multi-pass membrane protein</topology>
    </subcellularLocation>
</comment>
<comment type="similarity">
    <text evidence="4">Belongs to the acyltransferase 3 family.</text>
</comment>
<sequence>MDTKDFKRLEKMYSPRYLPGLDGLRAFAVIGIIIYHLNAQWLSGGFLGVDTFFVISGYLITSLLISEYYRTQKIDLLEFWKRRLKRLIPAVLFLICVVLTFTLIFKPELIIQMKRDAIAAIFYVSNWWYISQNVDYFNQFAIEPLKHLWSLAIEEQFYLLFPLVITFLLHRFKPRNIIQTLFIVSLISLGLMIVIHFITGDNSRVYFGTDTRLQTLLLGCILAFIWPPFALKKDISKKIVVSLDIIGISGFAVLMTLFFIVGDQDQWIYNGGFYIISFATLFIIAIAVHPSSLFAKFLSMKPLLIIGKRSYSLYLWHYPIIVFVNSYYVQGQIPVYVYIIEILLTALMAEISYRFIETPIRKKGFKAFAFLPKKKGQFARTVLVILLLVPSIVVLSGQFDALGKQHEAEKKEKKTEFKTTKKKVVKKDKQEDKQTANSKEDIKKSSPLLIGDSVMVDIGNVFTKKIPNAQIDGKVGRQLVDATPIVKSQYKDYAKKGQKVVVELGTNGAFTKDQLNELLDSFGKADIYLVSIRVPRDYEGRINKLIYEAAEKRSNVHLVDWYKASAGHPEYFAYDGIHLEYAGSKALTDLIVKTMETHATNKK</sequence>
<evidence type="ECO:0000250" key="1"/>
<evidence type="ECO:0000250" key="2">
    <source>
        <dbReference type="UniProtKB" id="Q2FV54"/>
    </source>
</evidence>
<evidence type="ECO:0000255" key="3"/>
<evidence type="ECO:0000305" key="4"/>
<reference key="1">
    <citation type="journal article" date="2001" name="Lancet">
        <title>Whole genome sequencing of meticillin-resistant Staphylococcus aureus.</title>
        <authorList>
            <person name="Kuroda M."/>
            <person name="Ohta T."/>
            <person name="Uchiyama I."/>
            <person name="Baba T."/>
            <person name="Yuzawa H."/>
            <person name="Kobayashi I."/>
            <person name="Cui L."/>
            <person name="Oguchi A."/>
            <person name="Aoki K."/>
            <person name="Nagai Y."/>
            <person name="Lian J.-Q."/>
            <person name="Ito T."/>
            <person name="Kanamori M."/>
            <person name="Matsumaru H."/>
            <person name="Maruyama A."/>
            <person name="Murakami H."/>
            <person name="Hosoyama A."/>
            <person name="Mizutani-Ui Y."/>
            <person name="Takahashi N.K."/>
            <person name="Sawano T."/>
            <person name="Inoue R."/>
            <person name="Kaito C."/>
            <person name="Sekimizu K."/>
            <person name="Hirakawa H."/>
            <person name="Kuhara S."/>
            <person name="Goto S."/>
            <person name="Yabuzaki J."/>
            <person name="Kanehisa M."/>
            <person name="Yamashita A."/>
            <person name="Oshima K."/>
            <person name="Furuya K."/>
            <person name="Yoshino C."/>
            <person name="Shiba T."/>
            <person name="Hattori M."/>
            <person name="Ogasawara N."/>
            <person name="Hayashi H."/>
            <person name="Hiramatsu K."/>
        </authorList>
    </citation>
    <scope>NUCLEOTIDE SEQUENCE [LARGE SCALE GENOMIC DNA]</scope>
    <source>
        <strain>Mu50 / ATCC 700699</strain>
    </source>
</reference>
<gene>
    <name type="primary">oatA</name>
    <name type="ordered locus">SAV2567</name>
</gene>
<name>OATA_STAAM</name>
<dbReference type="EC" id="2.3.1.-" evidence="2"/>
<dbReference type="EMBL" id="BA000017">
    <property type="protein sequence ID" value="BAB58729.1"/>
    <property type="molecule type" value="Genomic_DNA"/>
</dbReference>
<dbReference type="RefSeq" id="WP_000379821.1">
    <property type="nucleotide sequence ID" value="NC_002758.2"/>
</dbReference>
<dbReference type="SMR" id="Q99R71"/>
<dbReference type="KEGG" id="sav:SAV2567"/>
<dbReference type="HOGENOM" id="CLU_005679_11_2_9"/>
<dbReference type="PhylomeDB" id="Q99R71"/>
<dbReference type="Proteomes" id="UP000002481">
    <property type="component" value="Chromosome"/>
</dbReference>
<dbReference type="GO" id="GO:0005886">
    <property type="term" value="C:plasma membrane"/>
    <property type="evidence" value="ECO:0007669"/>
    <property type="project" value="UniProtKB-SubCell"/>
</dbReference>
<dbReference type="GO" id="GO:0016747">
    <property type="term" value="F:acyltransferase activity, transferring groups other than amino-acyl groups"/>
    <property type="evidence" value="ECO:0007669"/>
    <property type="project" value="InterPro"/>
</dbReference>
<dbReference type="GO" id="GO:0009103">
    <property type="term" value="P:lipopolysaccharide biosynthetic process"/>
    <property type="evidence" value="ECO:0007669"/>
    <property type="project" value="TreeGrafter"/>
</dbReference>
<dbReference type="CDD" id="cd01840">
    <property type="entry name" value="SGNH_hydrolase_yrhL_like"/>
    <property type="match status" value="1"/>
</dbReference>
<dbReference type="FunFam" id="3.40.50.1110:FF:000006">
    <property type="entry name" value="O-acetyltransferase OatA"/>
    <property type="match status" value="1"/>
</dbReference>
<dbReference type="Gene3D" id="3.40.50.1110">
    <property type="entry name" value="SGNH hydrolase"/>
    <property type="match status" value="1"/>
</dbReference>
<dbReference type="InterPro" id="IPR002656">
    <property type="entry name" value="Acyl_transf_3_dom"/>
</dbReference>
<dbReference type="InterPro" id="IPR050879">
    <property type="entry name" value="Acyltransferase_3"/>
</dbReference>
<dbReference type="InterPro" id="IPR036514">
    <property type="entry name" value="SGNH_hydro_sf"/>
</dbReference>
<dbReference type="PANTHER" id="PTHR23028">
    <property type="entry name" value="ACETYLTRANSFERASE"/>
    <property type="match status" value="1"/>
</dbReference>
<dbReference type="PANTHER" id="PTHR23028:SF53">
    <property type="entry name" value="ACYL_TRANSF_3 DOMAIN-CONTAINING PROTEIN"/>
    <property type="match status" value="1"/>
</dbReference>
<dbReference type="Pfam" id="PF01757">
    <property type="entry name" value="Acyl_transf_3"/>
    <property type="match status" value="1"/>
</dbReference>
<dbReference type="SUPFAM" id="SSF52266">
    <property type="entry name" value="SGNH hydrolase"/>
    <property type="match status" value="1"/>
</dbReference>